<feature type="signal peptide" evidence="2">
    <location>
        <begin position="1"/>
        <end position="21"/>
    </location>
</feature>
<feature type="chain" id="PRO_0000422856" description="Dirigent protein 25">
    <location>
        <begin position="22"/>
        <end position="389"/>
    </location>
</feature>
<feature type="region of interest" description="Disordered" evidence="3">
    <location>
        <begin position="50"/>
        <end position="135"/>
    </location>
</feature>
<feature type="compositionally biased region" description="Low complexity" evidence="3">
    <location>
        <begin position="50"/>
        <end position="68"/>
    </location>
</feature>
<feature type="compositionally biased region" description="Low complexity" evidence="3">
    <location>
        <begin position="77"/>
        <end position="86"/>
    </location>
</feature>
<feature type="compositionally biased region" description="Low complexity" evidence="3">
    <location>
        <begin position="98"/>
        <end position="135"/>
    </location>
</feature>
<reference key="1">
    <citation type="journal article" date="2000" name="Nature">
        <title>Sequence and analysis of chromosome 1 of the plant Arabidopsis thaliana.</title>
        <authorList>
            <person name="Theologis A."/>
            <person name="Ecker J.R."/>
            <person name="Palm C.J."/>
            <person name="Federspiel N.A."/>
            <person name="Kaul S."/>
            <person name="White O."/>
            <person name="Alonso J."/>
            <person name="Altafi H."/>
            <person name="Araujo R."/>
            <person name="Bowman C.L."/>
            <person name="Brooks S.Y."/>
            <person name="Buehler E."/>
            <person name="Chan A."/>
            <person name="Chao Q."/>
            <person name="Chen H."/>
            <person name="Cheuk R.F."/>
            <person name="Chin C.W."/>
            <person name="Chung M.K."/>
            <person name="Conn L."/>
            <person name="Conway A.B."/>
            <person name="Conway A.R."/>
            <person name="Creasy T.H."/>
            <person name="Dewar K."/>
            <person name="Dunn P."/>
            <person name="Etgu P."/>
            <person name="Feldblyum T.V."/>
            <person name="Feng J.-D."/>
            <person name="Fong B."/>
            <person name="Fujii C.Y."/>
            <person name="Gill J.E."/>
            <person name="Goldsmith A.D."/>
            <person name="Haas B."/>
            <person name="Hansen N.F."/>
            <person name="Hughes B."/>
            <person name="Huizar L."/>
            <person name="Hunter J.L."/>
            <person name="Jenkins J."/>
            <person name="Johnson-Hopson C."/>
            <person name="Khan S."/>
            <person name="Khaykin E."/>
            <person name="Kim C.J."/>
            <person name="Koo H.L."/>
            <person name="Kremenetskaia I."/>
            <person name="Kurtz D.B."/>
            <person name="Kwan A."/>
            <person name="Lam B."/>
            <person name="Langin-Hooper S."/>
            <person name="Lee A."/>
            <person name="Lee J.M."/>
            <person name="Lenz C.A."/>
            <person name="Li J.H."/>
            <person name="Li Y.-P."/>
            <person name="Lin X."/>
            <person name="Liu S.X."/>
            <person name="Liu Z.A."/>
            <person name="Luros J.S."/>
            <person name="Maiti R."/>
            <person name="Marziali A."/>
            <person name="Militscher J."/>
            <person name="Miranda M."/>
            <person name="Nguyen M."/>
            <person name="Nierman W.C."/>
            <person name="Osborne B.I."/>
            <person name="Pai G."/>
            <person name="Peterson J."/>
            <person name="Pham P.K."/>
            <person name="Rizzo M."/>
            <person name="Rooney T."/>
            <person name="Rowley D."/>
            <person name="Sakano H."/>
            <person name="Salzberg S.L."/>
            <person name="Schwartz J.R."/>
            <person name="Shinn P."/>
            <person name="Southwick A.M."/>
            <person name="Sun H."/>
            <person name="Tallon L.J."/>
            <person name="Tambunga G."/>
            <person name="Toriumi M.J."/>
            <person name="Town C.D."/>
            <person name="Utterback T."/>
            <person name="Van Aken S."/>
            <person name="Vaysberg M."/>
            <person name="Vysotskaia V.S."/>
            <person name="Walker M."/>
            <person name="Wu D."/>
            <person name="Yu G."/>
            <person name="Fraser C.M."/>
            <person name="Venter J.C."/>
            <person name="Davis R.W."/>
        </authorList>
    </citation>
    <scope>NUCLEOTIDE SEQUENCE [LARGE SCALE GENOMIC DNA]</scope>
    <source>
        <strain>cv. Columbia</strain>
    </source>
</reference>
<reference key="2">
    <citation type="journal article" date="2017" name="Plant J.">
        <title>Araport11: a complete reannotation of the Arabidopsis thaliana reference genome.</title>
        <authorList>
            <person name="Cheng C.Y."/>
            <person name="Krishnakumar V."/>
            <person name="Chan A.P."/>
            <person name="Thibaud-Nissen F."/>
            <person name="Schobel S."/>
            <person name="Town C.D."/>
        </authorList>
    </citation>
    <scope>GENOME REANNOTATION</scope>
    <source>
        <strain>cv. Columbia</strain>
    </source>
</reference>
<reference key="3">
    <citation type="journal article" date="2007" name="Phytochemistry">
        <title>Dirigent proteins in conifer defense II: Extended gene discovery, phylogeny, and constitutive and stress-induced gene expression in spruce (Picea spp.).</title>
        <authorList>
            <person name="Ralph S.G."/>
            <person name="Jancsik S."/>
            <person name="Bohlmann J."/>
        </authorList>
    </citation>
    <scope>GENE FAMILY</scope>
    <scope>NOMENCLATURE</scope>
</reference>
<gene>
    <name type="primary">DIR25</name>
    <name type="ordered locus">At1g07730</name>
    <name type="ORF">F24B9.16</name>
</gene>
<comment type="function">
    <text evidence="1">Dirigent proteins impart stereoselectivity on the phenoxy radical-coupling reaction, yielding optically active lignans from two molecules of coniferyl alcohol in the biosynthesis of lignans, flavonolignans, and alkaloids and thus plays a central role in plant secondary metabolism.</text>
</comment>
<comment type="subunit">
    <text evidence="1">Homodimer.</text>
</comment>
<comment type="subcellular location">
    <subcellularLocation>
        <location evidence="1">Secreted</location>
        <location evidence="1">Extracellular space</location>
        <location evidence="1">Apoplast</location>
    </subcellularLocation>
</comment>
<comment type="similarity">
    <text evidence="4">Belongs to the plant dirigent protein family.</text>
</comment>
<evidence type="ECO:0000250" key="1"/>
<evidence type="ECO:0000255" key="2"/>
<evidence type="ECO:0000256" key="3">
    <source>
        <dbReference type="SAM" id="MobiDB-lite"/>
    </source>
</evidence>
<evidence type="ECO:0000305" key="4"/>
<organism>
    <name type="scientific">Arabidopsis thaliana</name>
    <name type="common">Mouse-ear cress</name>
    <dbReference type="NCBI Taxonomy" id="3702"/>
    <lineage>
        <taxon>Eukaryota</taxon>
        <taxon>Viridiplantae</taxon>
        <taxon>Streptophyta</taxon>
        <taxon>Embryophyta</taxon>
        <taxon>Tracheophyta</taxon>
        <taxon>Spermatophyta</taxon>
        <taxon>Magnoliopsida</taxon>
        <taxon>eudicotyledons</taxon>
        <taxon>Gunneridae</taxon>
        <taxon>Pentapetalae</taxon>
        <taxon>rosids</taxon>
        <taxon>malvids</taxon>
        <taxon>Brassicales</taxon>
        <taxon>Brassicaceae</taxon>
        <taxon>Camelineae</taxon>
        <taxon>Arabidopsis</taxon>
    </lineage>
</organism>
<name>DIR25_ARATH</name>
<protein>
    <recommendedName>
        <fullName>Dirigent protein 25</fullName>
        <shortName>AtDIR25</shortName>
    </recommendedName>
</protein>
<proteinExistence type="inferred from homology"/>
<keyword id="KW-0052">Apoplast</keyword>
<keyword id="KW-1185">Reference proteome</keyword>
<keyword id="KW-0964">Secreted</keyword>
<keyword id="KW-0732">Signal</keyword>
<dbReference type="EMBL" id="AC007583">
    <property type="protein sequence ID" value="AAF75080.1"/>
    <property type="molecule type" value="Genomic_DNA"/>
</dbReference>
<dbReference type="EMBL" id="CP002684">
    <property type="protein sequence ID" value="AEE28172.1"/>
    <property type="molecule type" value="Genomic_DNA"/>
</dbReference>
<dbReference type="PIR" id="F86212">
    <property type="entry name" value="F86212"/>
</dbReference>
<dbReference type="RefSeq" id="NP_973782.1">
    <property type="nucleotide sequence ID" value="NM_202053.1"/>
</dbReference>
<dbReference type="SMR" id="Q9LQQ0"/>
<dbReference type="STRING" id="3702.Q9LQQ0"/>
<dbReference type="GlyGen" id="Q9LQQ0">
    <property type="glycosylation" value="2 sites"/>
</dbReference>
<dbReference type="PaxDb" id="3702-AT1G07730.2"/>
<dbReference type="ProteomicsDB" id="222207"/>
<dbReference type="EnsemblPlants" id="AT1G07730.2">
    <property type="protein sequence ID" value="AT1G07730.2"/>
    <property type="gene ID" value="AT1G07730"/>
</dbReference>
<dbReference type="GeneID" id="2745746"/>
<dbReference type="Gramene" id="AT1G07730.2">
    <property type="protein sequence ID" value="AT1G07730.2"/>
    <property type="gene ID" value="AT1G07730"/>
</dbReference>
<dbReference type="KEGG" id="ath:AT1G07730"/>
<dbReference type="Araport" id="AT1G07730"/>
<dbReference type="TAIR" id="AT1G07730"/>
<dbReference type="eggNOG" id="ENOG502SAD4">
    <property type="taxonomic scope" value="Eukaryota"/>
</dbReference>
<dbReference type="HOGENOM" id="CLU_059816_0_0_1"/>
<dbReference type="InParanoid" id="Q9LQQ0"/>
<dbReference type="OMA" id="DHTVIFF"/>
<dbReference type="PhylomeDB" id="Q9LQQ0"/>
<dbReference type="PRO" id="PR:Q9LQQ0"/>
<dbReference type="Proteomes" id="UP000006548">
    <property type="component" value="Chromosome 1"/>
</dbReference>
<dbReference type="ExpressionAtlas" id="Q9LQQ0">
    <property type="expression patterns" value="differential"/>
</dbReference>
<dbReference type="GO" id="GO:0048046">
    <property type="term" value="C:apoplast"/>
    <property type="evidence" value="ECO:0007669"/>
    <property type="project" value="UniProtKB-SubCell"/>
</dbReference>
<dbReference type="GO" id="GO:0009699">
    <property type="term" value="P:phenylpropanoid biosynthetic process"/>
    <property type="evidence" value="ECO:0007669"/>
    <property type="project" value="UniProtKB-ARBA"/>
</dbReference>
<dbReference type="Gene3D" id="2.40.480.10">
    <property type="entry name" value="Allene oxide cyclase-like"/>
    <property type="match status" value="1"/>
</dbReference>
<dbReference type="InterPro" id="IPR044859">
    <property type="entry name" value="Allene_oxi_cyc_Dirigent"/>
</dbReference>
<dbReference type="InterPro" id="IPR004265">
    <property type="entry name" value="Dirigent"/>
</dbReference>
<dbReference type="PANTHER" id="PTHR46215">
    <property type="entry name" value="DIRIGENT PROTEIN 24-RELATED"/>
    <property type="match status" value="1"/>
</dbReference>
<dbReference type="PANTHER" id="PTHR46215:SF9">
    <property type="entry name" value="DIRIGENT PROTEIN 25"/>
    <property type="match status" value="1"/>
</dbReference>
<dbReference type="Pfam" id="PF03018">
    <property type="entry name" value="Dirigent"/>
    <property type="match status" value="1"/>
</dbReference>
<sequence>MAGCKVLFFLILALAITFVSAARLLDEEEDIGLVPLPTTSPGPLPTVGLGPFPTANSGPATGIASGTGSASGGLGSLGTNTGPGPLSTTGSSLLPVASSGTLPVTGPGPLPTSSGLLPGASSGNLPGSGSGPLPTVGSGAAATGLGAGAGSVIGGSVPDNTLVFFMHDILGGSNPTARAVTGVVANAALSGQIPFAKPNGANLPVSNGVPSDNNNNGILNNNNVPLLVGLGGTTSNILQNNGNNMLNGLPVANGGQLPSGSSLQMLMFGTLTVMDNELTEGHELGSGLLGKAQGFYVASALDGTSQTMAFTAMFESGGYEDSISFFGVHRTAASESHLGVMGGTGKYVNARGFAIVKTFTGSSGTQQQQPHQFTDGLETVLECTVYLSY</sequence>
<accession>Q9LQQ0</accession>